<dbReference type="EC" id="3.4.24.-" evidence="2"/>
<dbReference type="EMBL" id="AE016817">
    <property type="protein sequence ID" value="AAS52104.2"/>
    <property type="molecule type" value="Genomic_DNA"/>
</dbReference>
<dbReference type="RefSeq" id="NP_984280.2">
    <property type="nucleotide sequence ID" value="NM_209633.2"/>
</dbReference>
<dbReference type="SMR" id="Q759T9"/>
<dbReference type="FunCoup" id="Q759T9">
    <property type="interactions" value="683"/>
</dbReference>
<dbReference type="STRING" id="284811.Q759T9"/>
<dbReference type="MEROPS" id="M16.013"/>
<dbReference type="EnsemblFungi" id="AAS52104">
    <property type="protein sequence ID" value="AAS52104"/>
    <property type="gene ID" value="AGOS_ADR184W"/>
</dbReference>
<dbReference type="GeneID" id="4620442"/>
<dbReference type="KEGG" id="ago:AGOS_ADR184W"/>
<dbReference type="eggNOG" id="KOG2019">
    <property type="taxonomic scope" value="Eukaryota"/>
</dbReference>
<dbReference type="HOGENOM" id="CLU_009165_0_0_1"/>
<dbReference type="InParanoid" id="Q759T9"/>
<dbReference type="OMA" id="FPFQVHY"/>
<dbReference type="OrthoDB" id="10250783at2759"/>
<dbReference type="Proteomes" id="UP000000591">
    <property type="component" value="Chromosome IV"/>
</dbReference>
<dbReference type="GO" id="GO:0005758">
    <property type="term" value="C:mitochondrial intermembrane space"/>
    <property type="evidence" value="ECO:0007669"/>
    <property type="project" value="UniProtKB-SubCell"/>
</dbReference>
<dbReference type="GO" id="GO:0005759">
    <property type="term" value="C:mitochondrial matrix"/>
    <property type="evidence" value="ECO:0000318"/>
    <property type="project" value="GO_Central"/>
</dbReference>
<dbReference type="GO" id="GO:0004176">
    <property type="term" value="F:ATP-dependent peptidase activity"/>
    <property type="evidence" value="ECO:0007669"/>
    <property type="project" value="EnsemblFungi"/>
</dbReference>
<dbReference type="GO" id="GO:0004222">
    <property type="term" value="F:metalloendopeptidase activity"/>
    <property type="evidence" value="ECO:0000318"/>
    <property type="project" value="GO_Central"/>
</dbReference>
<dbReference type="GO" id="GO:0008270">
    <property type="term" value="F:zinc ion binding"/>
    <property type="evidence" value="ECO:0000250"/>
    <property type="project" value="UniProtKB"/>
</dbReference>
<dbReference type="GO" id="GO:0034982">
    <property type="term" value="P:mitochondrial protein processing"/>
    <property type="evidence" value="ECO:0007669"/>
    <property type="project" value="EnsemblFungi"/>
</dbReference>
<dbReference type="GO" id="GO:0016485">
    <property type="term" value="P:protein processing"/>
    <property type="evidence" value="ECO:0000250"/>
    <property type="project" value="UniProtKB"/>
</dbReference>
<dbReference type="GO" id="GO:0051603">
    <property type="term" value="P:proteolysis involved in protein catabolic process"/>
    <property type="evidence" value="ECO:0007669"/>
    <property type="project" value="EnsemblFungi"/>
</dbReference>
<dbReference type="FunFam" id="3.30.830.10:FF:000013">
    <property type="entry name" value="Mitochondrial presequence protease"/>
    <property type="match status" value="1"/>
</dbReference>
<dbReference type="FunFam" id="3.30.830.10:FF:000009">
    <property type="entry name" value="Presequence protease, mitochondrial"/>
    <property type="match status" value="1"/>
</dbReference>
<dbReference type="FunFam" id="3.30.830.10:FF:000011">
    <property type="entry name" value="Presequence protease, mitochondrial"/>
    <property type="match status" value="1"/>
</dbReference>
<dbReference type="Gene3D" id="3.30.830.10">
    <property type="entry name" value="Metalloenzyme, LuxS/M16 peptidase-like"/>
    <property type="match status" value="4"/>
</dbReference>
<dbReference type="InterPro" id="IPR011249">
    <property type="entry name" value="Metalloenz_LuxS/M16"/>
</dbReference>
<dbReference type="InterPro" id="IPR011765">
    <property type="entry name" value="Pept_M16_N"/>
</dbReference>
<dbReference type="InterPro" id="IPR007863">
    <property type="entry name" value="Peptidase_M16_C"/>
</dbReference>
<dbReference type="InterPro" id="IPR013578">
    <property type="entry name" value="Peptidase_M16C_assoc"/>
</dbReference>
<dbReference type="InterPro" id="IPR055130">
    <property type="entry name" value="PreP_C"/>
</dbReference>
<dbReference type="PANTHER" id="PTHR43016">
    <property type="entry name" value="PRESEQUENCE PROTEASE"/>
    <property type="match status" value="1"/>
</dbReference>
<dbReference type="PANTHER" id="PTHR43016:SF13">
    <property type="entry name" value="PRESEQUENCE PROTEASE, MITOCHONDRIAL"/>
    <property type="match status" value="1"/>
</dbReference>
<dbReference type="Pfam" id="PF08367">
    <property type="entry name" value="M16C_assoc"/>
    <property type="match status" value="1"/>
</dbReference>
<dbReference type="Pfam" id="PF00675">
    <property type="entry name" value="Peptidase_M16"/>
    <property type="match status" value="1"/>
</dbReference>
<dbReference type="Pfam" id="PF05193">
    <property type="entry name" value="Peptidase_M16_C"/>
    <property type="match status" value="1"/>
</dbReference>
<dbReference type="Pfam" id="PF22516">
    <property type="entry name" value="PreP_C"/>
    <property type="match status" value="1"/>
</dbReference>
<dbReference type="SMART" id="SM01264">
    <property type="entry name" value="M16C_associated"/>
    <property type="match status" value="1"/>
</dbReference>
<dbReference type="SUPFAM" id="SSF63411">
    <property type="entry name" value="LuxS/MPP-like metallohydrolase"/>
    <property type="match status" value="4"/>
</dbReference>
<feature type="transit peptide" description="Mitochondrion" evidence="5">
    <location>
        <begin position="1"/>
        <end position="56"/>
    </location>
</feature>
<feature type="chain" id="PRO_0000249940" description="Presequence protease, mitochondrial">
    <location>
        <begin position="57"/>
        <end position="990"/>
    </location>
</feature>
<feature type="active site" description="Proton acceptor" evidence="3">
    <location>
        <position position="87"/>
    </location>
</feature>
<feature type="active site" evidence="4">
    <location>
        <position position="160"/>
    </location>
</feature>
<feature type="binding site" evidence="3">
    <location>
        <position position="84"/>
    </location>
    <ligand>
        <name>Zn(2+)</name>
        <dbReference type="ChEBI" id="CHEBI:29105"/>
        <note>catalytic</note>
    </ligand>
</feature>
<feature type="binding site" evidence="3">
    <location>
        <position position="88"/>
    </location>
    <ligand>
        <name>Zn(2+)</name>
        <dbReference type="ChEBI" id="CHEBI:29105"/>
        <note>catalytic</note>
    </ligand>
</feature>
<feature type="binding site" evidence="3">
    <location>
        <position position="185"/>
    </location>
    <ligand>
        <name>Zn(2+)</name>
        <dbReference type="ChEBI" id="CHEBI:29105"/>
        <note>catalytic</note>
    </ligand>
</feature>
<protein>
    <recommendedName>
        <fullName>Presequence protease, mitochondrial</fullName>
        <shortName>PreP</shortName>
        <ecNumber evidence="2">3.4.24.-</ecNumber>
    </recommendedName>
    <alternativeName>
        <fullName>Pitrilysin metalloproteinase</fullName>
    </alternativeName>
</protein>
<gene>
    <name type="primary">CYM1</name>
    <name type="ordered locus">ADR184W</name>
</gene>
<name>PREP_EREGS</name>
<accession>Q759T9</accession>
<sequence>MLRFQRTVPRVAIRRLANVYSEGAVLHGYKVRRAQEIPEMRMAAVELEHEMTGARHLHLEREDQNNVFSVGFRTPPPDATGVPHILEHTTLCGSQKYPVRDPFFKMLNRSLANFMNAMTAHDHTFYPFATTNQKDFANLRDLYLDATLRPLLRHADFLQEGWRLEHRDVGDASSELVFKGVVYNEMKGQVSNADYYFWIRFQEAIYPALHNSGGDPEHITDLSYEDLVAFHQNHYHPSNAKTFTYGNFPLRDTLRKLDDEFRGFGRRAIPQMHEKPLQLREAVSVEEPCQIDPMLPADKQCRTSMTWICGNPNDVYETFLLKILGSLLFDGHSSAFYKKLVEETGLAYELSVNTGVESQTAANFLTVGVQGCTDVGQVHKVIMETFTALLAQPFEKHRVEAILHQLELSKKDQKSDFGLQLLYGILPGWVNNTDPFDLLSLNSALQRFRADWDREGDGLFQRLLNKYVIGKPSFTFTMVGSSDFNQVKDQNEQSKLKAKVSSLTESDKEVIYKRGLHLQELQNSEQDLSKLPTLTTADIPHSSGHYFVSRDGPITTRQTDTNGITYIRMKRPLKGAIPYDAYPYIPLYSDGLMNIGTLLEDASAIEEQIRLHTGGISVSIGVHPNVETRLSELYLEISACALNSKTQYVFDIINKIMNETALSVRSEKMKVLIRAAASSFTSYAAENGHDLARLHTGAHFSQTQAIMEQTAGIEQVRHMNNLMSIIEKEAEFNTVLQNLEAMHRKIFVADGLEVMITTDNRQTSDVVKDQALKFIAGVQQSAGAESWLPEKYSRRALEKPYPALLQFPFQVHYTAQSTQGVSYTHPDGAHLQVLASLLTFKHLHREVREKGGAYGGGATYNATDGIFNFFSYRDPQPVRSLNIFRNAGKYVLNEARWTADDLNEAKLSIFQRVDAPISPSSEGLLQFRHNISDEQRDRRRQQLLKSTLDDVRRVADIYLVQPSPSQHMSAVVGPELPREVWSSQWPVIKV</sequence>
<reference key="1">
    <citation type="journal article" date="2004" name="Science">
        <title>The Ashbya gossypii genome as a tool for mapping the ancient Saccharomyces cerevisiae genome.</title>
        <authorList>
            <person name="Dietrich F.S."/>
            <person name="Voegeli S."/>
            <person name="Brachat S."/>
            <person name="Lerch A."/>
            <person name="Gates K."/>
            <person name="Steiner S."/>
            <person name="Mohr C."/>
            <person name="Poehlmann R."/>
            <person name="Luedi P."/>
            <person name="Choi S."/>
            <person name="Wing R.A."/>
            <person name="Flavier A."/>
            <person name="Gaffney T.D."/>
            <person name="Philippsen P."/>
        </authorList>
    </citation>
    <scope>NUCLEOTIDE SEQUENCE [LARGE SCALE GENOMIC DNA]</scope>
    <source>
        <strain>ATCC 10895 / CBS 109.51 / FGSC 9923 / NRRL Y-1056</strain>
    </source>
</reference>
<reference key="2">
    <citation type="journal article" date="2013" name="G3 (Bethesda)">
        <title>Genomes of Ashbya fungi isolated from insects reveal four mating-type loci, numerous translocations, lack of transposons, and distinct gene duplications.</title>
        <authorList>
            <person name="Dietrich F.S."/>
            <person name="Voegeli S."/>
            <person name="Kuo S."/>
            <person name="Philippsen P."/>
        </authorList>
    </citation>
    <scope>GENOME REANNOTATION</scope>
    <scope>SEQUENCE REVISION TO 374 AND 377</scope>
    <source>
        <strain>ATCC 10895 / CBS 109.51 / FGSC 9923 / NRRL Y-1056</strain>
    </source>
</reference>
<organism>
    <name type="scientific">Eremothecium gossypii (strain ATCC 10895 / CBS 109.51 / FGSC 9923 / NRRL Y-1056)</name>
    <name type="common">Yeast</name>
    <name type="synonym">Ashbya gossypii</name>
    <dbReference type="NCBI Taxonomy" id="284811"/>
    <lineage>
        <taxon>Eukaryota</taxon>
        <taxon>Fungi</taxon>
        <taxon>Dikarya</taxon>
        <taxon>Ascomycota</taxon>
        <taxon>Saccharomycotina</taxon>
        <taxon>Saccharomycetes</taxon>
        <taxon>Saccharomycetales</taxon>
        <taxon>Saccharomycetaceae</taxon>
        <taxon>Eremothecium</taxon>
    </lineage>
</organism>
<evidence type="ECO:0000250" key="1">
    <source>
        <dbReference type="UniProtKB" id="A0A8H8UNX0"/>
    </source>
</evidence>
<evidence type="ECO:0000250" key="2">
    <source>
        <dbReference type="UniProtKB" id="P32898"/>
    </source>
</evidence>
<evidence type="ECO:0000250" key="3">
    <source>
        <dbReference type="UniProtKB" id="Q5JRX3"/>
    </source>
</evidence>
<evidence type="ECO:0000250" key="4">
    <source>
        <dbReference type="UniProtKB" id="Q9LJL3"/>
    </source>
</evidence>
<evidence type="ECO:0000255" key="5"/>
<evidence type="ECO:0000305" key="6"/>
<comment type="function">
    <text evidence="1 2">Degrades mitochondrial transit peptides after their cleavage in the intermembrane space or in the matrix, and presequence peptides; clearance of these peptides is required to keep the presequence processing machinery running (By similarity). Preferentially cleaves the N-terminal side of paired basic amino acid residues (By similarity). Also degrades other unstructured peptides (By similarity). May function as an ATP-dependent peptidase as opposed to a metalloendopeptidase (By similarity).</text>
</comment>
<comment type="cofactor">
    <cofactor evidence="3">
        <name>Zn(2+)</name>
        <dbReference type="ChEBI" id="CHEBI:29105"/>
    </cofactor>
    <text evidence="3">Binds 1 zinc ion per subunit.</text>
</comment>
<comment type="subunit">
    <text evidence="3">Monomer and homodimer; homodimerization is induced by binding of the substrate.</text>
</comment>
<comment type="subcellular location">
    <subcellularLocation>
        <location evidence="2">Mitochondrion intermembrane space</location>
    </subcellularLocation>
    <subcellularLocation>
        <location evidence="2">Mitochondrion matrix</location>
    </subcellularLocation>
</comment>
<comment type="similarity">
    <text evidence="6">Belongs to the peptidase M16 family. PreP subfamily.</text>
</comment>
<keyword id="KW-0378">Hydrolase</keyword>
<keyword id="KW-0479">Metal-binding</keyword>
<keyword id="KW-0482">Metalloprotease</keyword>
<keyword id="KW-0496">Mitochondrion</keyword>
<keyword id="KW-0645">Protease</keyword>
<keyword id="KW-1185">Reference proteome</keyword>
<keyword id="KW-0809">Transit peptide</keyword>
<keyword id="KW-0862">Zinc</keyword>
<proteinExistence type="inferred from homology"/>